<reference key="1">
    <citation type="journal article" date="2002" name="Lancet">
        <title>Genome and virulence determinants of high virulence community-acquired MRSA.</title>
        <authorList>
            <person name="Baba T."/>
            <person name="Takeuchi F."/>
            <person name="Kuroda M."/>
            <person name="Yuzawa H."/>
            <person name="Aoki K."/>
            <person name="Oguchi A."/>
            <person name="Nagai Y."/>
            <person name="Iwama N."/>
            <person name="Asano K."/>
            <person name="Naimi T."/>
            <person name="Kuroda H."/>
            <person name="Cui L."/>
            <person name="Yamamoto K."/>
            <person name="Hiramatsu K."/>
        </authorList>
    </citation>
    <scope>NUCLEOTIDE SEQUENCE [LARGE SCALE GENOMIC DNA]</scope>
    <source>
        <strain>MW2</strain>
    </source>
</reference>
<feature type="chain" id="PRO_0000139617" description="Hypoxanthine-guanine phosphoribosyltransferase">
    <location>
        <begin position="1"/>
        <end position="179"/>
    </location>
</feature>
<feature type="active site" description="Proton acceptor" evidence="2">
    <location>
        <position position="102"/>
    </location>
</feature>
<feature type="binding site" evidence="3">
    <location>
        <position position="42"/>
    </location>
    <ligand>
        <name>diphosphate</name>
        <dbReference type="ChEBI" id="CHEBI:33019"/>
    </ligand>
</feature>
<feature type="binding site" evidence="3">
    <location>
        <position position="43"/>
    </location>
    <ligand>
        <name>diphosphate</name>
        <dbReference type="ChEBI" id="CHEBI:33019"/>
    </ligand>
</feature>
<feature type="binding site" evidence="3">
    <location>
        <position position="98"/>
    </location>
    <ligand>
        <name>Mg(2+)</name>
        <dbReference type="ChEBI" id="CHEBI:18420"/>
    </ligand>
</feature>
<feature type="binding site" evidence="3">
    <location>
        <position position="99"/>
    </location>
    <ligand>
        <name>Mg(2+)</name>
        <dbReference type="ChEBI" id="CHEBI:18420"/>
    </ligand>
</feature>
<feature type="binding site" evidence="3">
    <location>
        <position position="130"/>
    </location>
    <ligand>
        <name>GMP</name>
        <dbReference type="ChEBI" id="CHEBI:58115"/>
    </ligand>
</feature>
<feature type="binding site" evidence="3">
    <location>
        <begin position="151"/>
        <end position="152"/>
    </location>
    <ligand>
        <name>GMP</name>
        <dbReference type="ChEBI" id="CHEBI:58115"/>
    </ligand>
</feature>
<feature type="binding site" evidence="3">
    <location>
        <position position="158"/>
    </location>
    <ligand>
        <name>GMP</name>
        <dbReference type="ChEBI" id="CHEBI:58115"/>
    </ligand>
</feature>
<feature type="binding site" evidence="3">
    <location>
        <position position="164"/>
    </location>
    <ligand>
        <name>diphosphate</name>
        <dbReference type="ChEBI" id="CHEBI:33019"/>
    </ligand>
</feature>
<organism>
    <name type="scientific">Staphylococcus aureus (strain MW2)</name>
    <dbReference type="NCBI Taxonomy" id="196620"/>
    <lineage>
        <taxon>Bacteria</taxon>
        <taxon>Bacillati</taxon>
        <taxon>Bacillota</taxon>
        <taxon>Bacilli</taxon>
        <taxon>Bacillales</taxon>
        <taxon>Staphylococcaceae</taxon>
        <taxon>Staphylococcus</taxon>
    </lineage>
</organism>
<name>HGPRT_STAAW</name>
<gene>
    <name type="primary">hpt</name>
    <name type="ordered locus">MW0465</name>
</gene>
<keyword id="KW-0963">Cytoplasm</keyword>
<keyword id="KW-0328">Glycosyltransferase</keyword>
<keyword id="KW-0460">Magnesium</keyword>
<keyword id="KW-0479">Metal-binding</keyword>
<keyword id="KW-0547">Nucleotide-binding</keyword>
<keyword id="KW-0660">Purine salvage</keyword>
<keyword id="KW-0808">Transferase</keyword>
<evidence type="ECO:0000250" key="1"/>
<evidence type="ECO:0000250" key="2">
    <source>
        <dbReference type="UniProtKB" id="P0A9M2"/>
    </source>
</evidence>
<evidence type="ECO:0000250" key="3">
    <source>
        <dbReference type="UniProtKB" id="P9WHQ9"/>
    </source>
</evidence>
<evidence type="ECO:0000305" key="4"/>
<protein>
    <recommendedName>
        <fullName>Hypoxanthine-guanine phosphoribosyltransferase</fullName>
        <shortName>HGPRT</shortName>
        <shortName>HGPRTase</shortName>
        <ecNumber evidence="3">2.4.2.8</ecNumber>
    </recommendedName>
</protein>
<proteinExistence type="inferred from homology"/>
<sequence length="179" mass="20154">MHNDLKEVLLTEEDIQNICKELGAQLTKDYQGKPLVCVGILKGSAMFMSDLIKRIDTHLSIDFMDVSSYHGGTESTGEVQIIKDLGSSIENKDVLIIEDILETGTTLKSITELLQSRKVNSLEIVTLLDKPNRRKADIEAKYVGKKIPDEFVVGYGLDYRELYRNLPYIGTLKPEVYSN</sequence>
<accession>P65828</accession>
<accession>Q99W93</accession>
<comment type="function">
    <text evidence="3">Purine salvage pathway enzyme that catalyzes the transfer of the ribosyl-5-phosphate group from 5-phospho-alpha-D-ribose 1-diphosphate (PRPP) to the N9 position of the 6-oxopurines hypoxanthine and guanine to form the corresponding ribonucleotides IMP (inosine 5'-monophosphate) and GMP (guanosine 5'-monophosphate), with the release of PPi.</text>
</comment>
<comment type="catalytic activity">
    <reaction evidence="3">
        <text>IMP + diphosphate = hypoxanthine + 5-phospho-alpha-D-ribose 1-diphosphate</text>
        <dbReference type="Rhea" id="RHEA:17973"/>
        <dbReference type="ChEBI" id="CHEBI:17368"/>
        <dbReference type="ChEBI" id="CHEBI:33019"/>
        <dbReference type="ChEBI" id="CHEBI:58017"/>
        <dbReference type="ChEBI" id="CHEBI:58053"/>
        <dbReference type="EC" id="2.4.2.8"/>
    </reaction>
    <physiologicalReaction direction="right-to-left" evidence="3">
        <dbReference type="Rhea" id="RHEA:17975"/>
    </physiologicalReaction>
</comment>
<comment type="catalytic activity">
    <reaction evidence="3">
        <text>GMP + diphosphate = guanine + 5-phospho-alpha-D-ribose 1-diphosphate</text>
        <dbReference type="Rhea" id="RHEA:25424"/>
        <dbReference type="ChEBI" id="CHEBI:16235"/>
        <dbReference type="ChEBI" id="CHEBI:33019"/>
        <dbReference type="ChEBI" id="CHEBI:58017"/>
        <dbReference type="ChEBI" id="CHEBI:58115"/>
        <dbReference type="EC" id="2.4.2.8"/>
    </reaction>
    <physiologicalReaction direction="right-to-left" evidence="3">
        <dbReference type="Rhea" id="RHEA:25426"/>
    </physiologicalReaction>
</comment>
<comment type="cofactor">
    <cofactor evidence="3">
        <name>Mg(2+)</name>
        <dbReference type="ChEBI" id="CHEBI:18420"/>
    </cofactor>
</comment>
<comment type="pathway">
    <text evidence="3">Purine metabolism; IMP biosynthesis via salvage pathway; IMP from hypoxanthine: step 1/1.</text>
</comment>
<comment type="pathway">
    <text evidence="3">Purine metabolism; GMP biosynthesis via salvage pathway; GMP from guanine: step 1/1.</text>
</comment>
<comment type="subcellular location">
    <subcellularLocation>
        <location evidence="1">Cytoplasm</location>
    </subcellularLocation>
</comment>
<comment type="similarity">
    <text evidence="4">Belongs to the purine/pyrimidine phosphoribosyltransferase family.</text>
</comment>
<dbReference type="EC" id="2.4.2.8" evidence="3"/>
<dbReference type="EMBL" id="BA000033">
    <property type="protein sequence ID" value="BAB94330.1"/>
    <property type="molecule type" value="Genomic_DNA"/>
</dbReference>
<dbReference type="RefSeq" id="WP_000551283.1">
    <property type="nucleotide sequence ID" value="NC_003923.1"/>
</dbReference>
<dbReference type="SMR" id="P65828"/>
<dbReference type="KEGG" id="sam:MW0465"/>
<dbReference type="HOGENOM" id="CLU_073615_0_0_9"/>
<dbReference type="UniPathway" id="UPA00591">
    <property type="reaction ID" value="UER00648"/>
</dbReference>
<dbReference type="UniPathway" id="UPA00909">
    <property type="reaction ID" value="UER00887"/>
</dbReference>
<dbReference type="GO" id="GO:0005829">
    <property type="term" value="C:cytosol"/>
    <property type="evidence" value="ECO:0007669"/>
    <property type="project" value="TreeGrafter"/>
</dbReference>
<dbReference type="GO" id="GO:0052657">
    <property type="term" value="F:guanine phosphoribosyltransferase activity"/>
    <property type="evidence" value="ECO:0007669"/>
    <property type="project" value="RHEA"/>
</dbReference>
<dbReference type="GO" id="GO:0004422">
    <property type="term" value="F:hypoxanthine phosphoribosyltransferase activity"/>
    <property type="evidence" value="ECO:0007669"/>
    <property type="project" value="InterPro"/>
</dbReference>
<dbReference type="GO" id="GO:0000287">
    <property type="term" value="F:magnesium ion binding"/>
    <property type="evidence" value="ECO:0007669"/>
    <property type="project" value="TreeGrafter"/>
</dbReference>
<dbReference type="GO" id="GO:0000166">
    <property type="term" value="F:nucleotide binding"/>
    <property type="evidence" value="ECO:0007669"/>
    <property type="project" value="UniProtKB-KW"/>
</dbReference>
<dbReference type="GO" id="GO:0032263">
    <property type="term" value="P:GMP salvage"/>
    <property type="evidence" value="ECO:0007669"/>
    <property type="project" value="UniProtKB-UniPathway"/>
</dbReference>
<dbReference type="GO" id="GO:0006178">
    <property type="term" value="P:guanine salvage"/>
    <property type="evidence" value="ECO:0007669"/>
    <property type="project" value="TreeGrafter"/>
</dbReference>
<dbReference type="GO" id="GO:0046100">
    <property type="term" value="P:hypoxanthine metabolic process"/>
    <property type="evidence" value="ECO:0007669"/>
    <property type="project" value="TreeGrafter"/>
</dbReference>
<dbReference type="GO" id="GO:0032264">
    <property type="term" value="P:IMP salvage"/>
    <property type="evidence" value="ECO:0007669"/>
    <property type="project" value="UniProtKB-UniPathway"/>
</dbReference>
<dbReference type="GO" id="GO:0006166">
    <property type="term" value="P:purine ribonucleoside salvage"/>
    <property type="evidence" value="ECO:0007669"/>
    <property type="project" value="UniProtKB-KW"/>
</dbReference>
<dbReference type="CDD" id="cd06223">
    <property type="entry name" value="PRTases_typeI"/>
    <property type="match status" value="1"/>
</dbReference>
<dbReference type="FunFam" id="3.40.50.2020:FF:000006">
    <property type="entry name" value="Hypoxanthine phosphoribosyltransferase"/>
    <property type="match status" value="1"/>
</dbReference>
<dbReference type="Gene3D" id="3.40.50.2020">
    <property type="match status" value="1"/>
</dbReference>
<dbReference type="InterPro" id="IPR050408">
    <property type="entry name" value="HGPRT"/>
</dbReference>
<dbReference type="InterPro" id="IPR005904">
    <property type="entry name" value="Hxn_phspho_trans"/>
</dbReference>
<dbReference type="InterPro" id="IPR000836">
    <property type="entry name" value="PRibTrfase_dom"/>
</dbReference>
<dbReference type="InterPro" id="IPR029057">
    <property type="entry name" value="PRTase-like"/>
</dbReference>
<dbReference type="NCBIfam" id="TIGR01203">
    <property type="entry name" value="HGPRTase"/>
    <property type="match status" value="1"/>
</dbReference>
<dbReference type="PANTHER" id="PTHR43340:SF1">
    <property type="entry name" value="HYPOXANTHINE PHOSPHORIBOSYLTRANSFERASE"/>
    <property type="match status" value="1"/>
</dbReference>
<dbReference type="PANTHER" id="PTHR43340">
    <property type="entry name" value="HYPOXANTHINE-GUANINE PHOSPHORIBOSYLTRANSFERASE"/>
    <property type="match status" value="1"/>
</dbReference>
<dbReference type="Pfam" id="PF00156">
    <property type="entry name" value="Pribosyltran"/>
    <property type="match status" value="1"/>
</dbReference>
<dbReference type="SUPFAM" id="SSF53271">
    <property type="entry name" value="PRTase-like"/>
    <property type="match status" value="1"/>
</dbReference>